<dbReference type="EC" id="6.3.5.3" evidence="1"/>
<dbReference type="EMBL" id="AP008232">
    <property type="protein sequence ID" value="BAE75053.1"/>
    <property type="molecule type" value="Genomic_DNA"/>
</dbReference>
<dbReference type="RefSeq" id="WP_011411602.1">
    <property type="nucleotide sequence ID" value="NC_007712.1"/>
</dbReference>
<dbReference type="SMR" id="Q2NS22"/>
<dbReference type="STRING" id="343509.SG1778"/>
<dbReference type="KEGG" id="sgl:SG1778"/>
<dbReference type="eggNOG" id="COG0046">
    <property type="taxonomic scope" value="Bacteria"/>
</dbReference>
<dbReference type="eggNOG" id="COG0047">
    <property type="taxonomic scope" value="Bacteria"/>
</dbReference>
<dbReference type="HOGENOM" id="CLU_001031_0_2_6"/>
<dbReference type="OrthoDB" id="9804441at2"/>
<dbReference type="UniPathway" id="UPA00074">
    <property type="reaction ID" value="UER00128"/>
</dbReference>
<dbReference type="Proteomes" id="UP000001932">
    <property type="component" value="Chromosome"/>
</dbReference>
<dbReference type="GO" id="GO:0005737">
    <property type="term" value="C:cytoplasm"/>
    <property type="evidence" value="ECO:0007669"/>
    <property type="project" value="UniProtKB-SubCell"/>
</dbReference>
<dbReference type="GO" id="GO:0005524">
    <property type="term" value="F:ATP binding"/>
    <property type="evidence" value="ECO:0007669"/>
    <property type="project" value="UniProtKB-UniRule"/>
</dbReference>
<dbReference type="GO" id="GO:0046872">
    <property type="term" value="F:metal ion binding"/>
    <property type="evidence" value="ECO:0007669"/>
    <property type="project" value="UniProtKB-KW"/>
</dbReference>
<dbReference type="GO" id="GO:0004642">
    <property type="term" value="F:phosphoribosylformylglycinamidine synthase activity"/>
    <property type="evidence" value="ECO:0007669"/>
    <property type="project" value="UniProtKB-UniRule"/>
</dbReference>
<dbReference type="GO" id="GO:0006189">
    <property type="term" value="P:'de novo' IMP biosynthetic process"/>
    <property type="evidence" value="ECO:0007669"/>
    <property type="project" value="UniProtKB-UniRule"/>
</dbReference>
<dbReference type="CDD" id="cd01740">
    <property type="entry name" value="GATase1_FGAR_AT"/>
    <property type="match status" value="1"/>
</dbReference>
<dbReference type="CDD" id="cd02203">
    <property type="entry name" value="PurL_repeat1"/>
    <property type="match status" value="1"/>
</dbReference>
<dbReference type="FunFam" id="1.10.8.750:FF:000002">
    <property type="entry name" value="Phosphoribosylformylglycinamidine synthase"/>
    <property type="match status" value="1"/>
</dbReference>
<dbReference type="FunFam" id="3.30.1330.10:FF:000002">
    <property type="entry name" value="Phosphoribosylformylglycinamidine synthase"/>
    <property type="match status" value="1"/>
</dbReference>
<dbReference type="FunFam" id="3.30.1330.10:FF:000005">
    <property type="entry name" value="Phosphoribosylformylglycinamidine synthase"/>
    <property type="match status" value="1"/>
</dbReference>
<dbReference type="FunFam" id="3.40.50.880:FF:000008">
    <property type="entry name" value="Phosphoribosylformylglycinamidine synthase"/>
    <property type="match status" value="1"/>
</dbReference>
<dbReference type="FunFam" id="3.90.650.10:FF:000002">
    <property type="entry name" value="Phosphoribosylformylglycinamidine synthase"/>
    <property type="match status" value="1"/>
</dbReference>
<dbReference type="FunFam" id="3.90.650.10:FF:000005">
    <property type="entry name" value="Phosphoribosylformylglycinamidine synthase"/>
    <property type="match status" value="1"/>
</dbReference>
<dbReference type="Gene3D" id="3.40.50.880">
    <property type="match status" value="1"/>
</dbReference>
<dbReference type="Gene3D" id="1.10.8.750">
    <property type="entry name" value="Phosphoribosylformylglycinamidine synthase, linker domain"/>
    <property type="match status" value="1"/>
</dbReference>
<dbReference type="Gene3D" id="3.90.650.10">
    <property type="entry name" value="PurM-like C-terminal domain"/>
    <property type="match status" value="2"/>
</dbReference>
<dbReference type="Gene3D" id="3.30.1330.10">
    <property type="entry name" value="PurM-like, N-terminal domain"/>
    <property type="match status" value="2"/>
</dbReference>
<dbReference type="HAMAP" id="MF_00419">
    <property type="entry name" value="PurL_1"/>
    <property type="match status" value="1"/>
</dbReference>
<dbReference type="InterPro" id="IPR029062">
    <property type="entry name" value="Class_I_gatase-like"/>
</dbReference>
<dbReference type="InterPro" id="IPR040707">
    <property type="entry name" value="FGAR-AT_N"/>
</dbReference>
<dbReference type="InterPro" id="IPR055181">
    <property type="entry name" value="FGAR-AT_PurM_N-like"/>
</dbReference>
<dbReference type="InterPro" id="IPR010073">
    <property type="entry name" value="PurL_large"/>
</dbReference>
<dbReference type="InterPro" id="IPR041609">
    <property type="entry name" value="PurL_linker"/>
</dbReference>
<dbReference type="InterPro" id="IPR010918">
    <property type="entry name" value="PurM-like_C_dom"/>
</dbReference>
<dbReference type="InterPro" id="IPR036676">
    <property type="entry name" value="PurM-like_C_sf"/>
</dbReference>
<dbReference type="InterPro" id="IPR036921">
    <property type="entry name" value="PurM-like_N_sf"/>
</dbReference>
<dbReference type="InterPro" id="IPR036604">
    <property type="entry name" value="PurS-like_sf"/>
</dbReference>
<dbReference type="NCBIfam" id="TIGR01735">
    <property type="entry name" value="FGAM_synt"/>
    <property type="match status" value="1"/>
</dbReference>
<dbReference type="NCBIfam" id="NF003672">
    <property type="entry name" value="PRK05297.1"/>
    <property type="match status" value="1"/>
</dbReference>
<dbReference type="PANTHER" id="PTHR10099">
    <property type="entry name" value="PHOSPHORIBOSYLFORMYLGLYCINAMIDINE SYNTHASE"/>
    <property type="match status" value="1"/>
</dbReference>
<dbReference type="PANTHER" id="PTHR10099:SF1">
    <property type="entry name" value="PHOSPHORIBOSYLFORMYLGLYCINAMIDINE SYNTHASE"/>
    <property type="match status" value="1"/>
</dbReference>
<dbReference type="Pfam" id="PF02769">
    <property type="entry name" value="AIRS_C"/>
    <property type="match status" value="2"/>
</dbReference>
<dbReference type="Pfam" id="PF18072">
    <property type="entry name" value="FGAR-AT_linker"/>
    <property type="match status" value="1"/>
</dbReference>
<dbReference type="Pfam" id="PF18076">
    <property type="entry name" value="FGAR-AT_N"/>
    <property type="match status" value="1"/>
</dbReference>
<dbReference type="Pfam" id="PF22689">
    <property type="entry name" value="FGAR-AT_PurM_N-like"/>
    <property type="match status" value="1"/>
</dbReference>
<dbReference type="Pfam" id="PF13507">
    <property type="entry name" value="GATase_5"/>
    <property type="match status" value="1"/>
</dbReference>
<dbReference type="SMART" id="SM01211">
    <property type="entry name" value="GATase_5"/>
    <property type="match status" value="1"/>
</dbReference>
<dbReference type="SUPFAM" id="SSF52317">
    <property type="entry name" value="Class I glutamine amidotransferase-like"/>
    <property type="match status" value="1"/>
</dbReference>
<dbReference type="SUPFAM" id="SSF109736">
    <property type="entry name" value="FGAM synthase PurL, linker domain"/>
    <property type="match status" value="1"/>
</dbReference>
<dbReference type="SUPFAM" id="SSF56042">
    <property type="entry name" value="PurM C-terminal domain-like"/>
    <property type="match status" value="2"/>
</dbReference>
<dbReference type="SUPFAM" id="SSF55326">
    <property type="entry name" value="PurM N-terminal domain-like"/>
    <property type="match status" value="2"/>
</dbReference>
<dbReference type="SUPFAM" id="SSF82697">
    <property type="entry name" value="PurS-like"/>
    <property type="match status" value="1"/>
</dbReference>
<dbReference type="PROSITE" id="PS51273">
    <property type="entry name" value="GATASE_TYPE_1"/>
    <property type="match status" value="1"/>
</dbReference>
<feature type="chain" id="PRO_0000264600" description="Phosphoribosylformylglycinamidine synthase">
    <location>
        <begin position="1"/>
        <end position="1295"/>
    </location>
</feature>
<feature type="domain" description="Glutamine amidotransferase type-1" evidence="1">
    <location>
        <begin position="1042"/>
        <end position="1295"/>
    </location>
</feature>
<feature type="region of interest" description="Disordered" evidence="2">
    <location>
        <begin position="304"/>
        <end position="326"/>
    </location>
</feature>
<feature type="region of interest" description="Disordered" evidence="2">
    <location>
        <begin position="995"/>
        <end position="1017"/>
    </location>
</feature>
<feature type="compositionally biased region" description="Basic and acidic residues" evidence="2">
    <location>
        <begin position="995"/>
        <end position="1012"/>
    </location>
</feature>
<feature type="active site" description="Nucleophile" evidence="1">
    <location>
        <position position="1135"/>
    </location>
</feature>
<feature type="active site" evidence="1">
    <location>
        <position position="1260"/>
    </location>
</feature>
<feature type="active site" evidence="1">
    <location>
        <position position="1262"/>
    </location>
</feature>
<feature type="binding site" evidence="1">
    <location>
        <begin position="306"/>
        <end position="317"/>
    </location>
    <ligand>
        <name>ATP</name>
        <dbReference type="ChEBI" id="CHEBI:30616"/>
    </ligand>
</feature>
<feature type="binding site" evidence="1">
    <location>
        <begin position="385"/>
        <end position="387"/>
    </location>
    <ligand>
        <name>ATP</name>
        <dbReference type="ChEBI" id="CHEBI:30616"/>
    </ligand>
</feature>
<feature type="binding site" evidence="1">
    <location>
        <position position="677"/>
    </location>
    <ligand>
        <name>ATP</name>
        <dbReference type="ChEBI" id="CHEBI:30616"/>
    </ligand>
</feature>
<feature type="binding site" evidence="1">
    <location>
        <position position="678"/>
    </location>
    <ligand>
        <name>Mg(2+)</name>
        <dbReference type="ChEBI" id="CHEBI:18420"/>
    </ligand>
</feature>
<feature type="binding site" evidence="1">
    <location>
        <position position="717"/>
    </location>
    <ligand>
        <name>Mg(2+)</name>
        <dbReference type="ChEBI" id="CHEBI:18420"/>
    </ligand>
</feature>
<feature type="binding site" evidence="1">
    <location>
        <position position="721"/>
    </location>
    <ligand>
        <name>Mg(2+)</name>
        <dbReference type="ChEBI" id="CHEBI:18420"/>
    </ligand>
</feature>
<feature type="binding site" evidence="1">
    <location>
        <position position="884"/>
    </location>
    <ligand>
        <name>Mg(2+)</name>
        <dbReference type="ChEBI" id="CHEBI:18420"/>
    </ligand>
</feature>
<protein>
    <recommendedName>
        <fullName evidence="1">Phosphoribosylformylglycinamidine synthase</fullName>
        <shortName evidence="1">FGAM synthase</shortName>
        <shortName evidence="1">FGAMS</shortName>
        <ecNumber evidence="1">6.3.5.3</ecNumber>
    </recommendedName>
    <alternativeName>
        <fullName evidence="1">Formylglycinamide ribonucleotide amidotransferase</fullName>
        <shortName evidence="1">FGAR amidotransferase</shortName>
        <shortName evidence="1">FGAR-AT</shortName>
    </alternativeName>
</protein>
<sequence>MEILRGSPALSAFRINKLLVRCRDARLAVDDIYAEYIHFADVSAALDEDALSRLQRLLKYGPSLAEHQPQGRLLLVTPRPGTRSPWSSKATDIAHNCGLPQIKRLERGLAYYIQAPQLSEPQWGYLAALLHDRMMETVFTRLEEAAALFAQHAPAPVTLVDVLGEGRGALEAANLALGLALAQDEIDYLFAAFTRLGRNPSDVELYMFAQANSEHCRHKIFNADWVIDGQPQAKSLFKMIKNTFEQTPEYVLSAYKDNASVMEGSAVGRFFPDAQAGRYDYHQEATHILMKVETHNHPTAISPWPGAATGSGGEIRDEGATGRGAKPKAGLVGFSVSNLRIPGFEQPWEEDFGRPERIVSALDIMTDGPLGGAAFNNEFGRPALTGYFRTYEERVDSHNGVELRGYHKPVMLAGGIGNIRASHVQKGEISVGAKLIVLGGPAMNIGLGGGAASSMASGQSDADLDFASVQRDNPEMERRCQEVIDRCWQRGEENPILFIHDVGAGGLSNAMPELVSDGGRGGRFQLREIPNDEPGMSPLEVWCNESQERYVMAVAPERLAEFDAICRRECAPYAVIGEATDALHLSLDDAHYDNRPIDLPLDVLLGKTPKMQREAVSLQAAGFPLNRDGIKLAEAINRVLHLPAVAEKTFLITIGDRSVTGMVARDQMVGPWQVPVADCAVTTASLDSYYGEAMSLGERAPVALLNFAASARLAVGEALTNLAATHIGDIKRVKLSANWMAAAGHPGEDAGLYQAVKAVGEELCPALGLTIPVGKDSMSMKTRWQHGAESREMTAPLSLVITAFARVEDVRATVTPQLQPARDNVLLLIDLGAGHHALGATALAQVYRQLGDETSDVRDAGQLAAFFRVMQQLVAQGWLLAYHDRADGGLLVTLAEMAFAGHCGIDADIGPLGDDALAALFNEELGAVIQIDEADRDAITALFHQEGLADCLHYLGTAQPGDRFILRAGERSLYSESRTTLRTWWAETSWQMQRLRDNPESADQEHASRQDDNDPGLTVALSFDPKDDIAAPFIAKGARPKVAVLREQGVNSHVEMAAAFHRAGFEAIDVHMSDLFTGVQTLEGFHTLVACGGFSYGDVLGAGEGWAKSVLFNLRVRDEFEAFFHRPQTLALGVCNGCQMMSNLRELIPGAELWPRFVRNKSERFEARFSLVEVTQSQSLLLQGMVGSRLPIAVSHGEGRVEVRDAAHLAAIEHAGLVALRYVDNYGKVTENYPANPNGSPNGITAVTNASGRVTLTMPHPERVFRTVSHSWHPAEWGEDGPWMRLFRNARKQLG</sequence>
<keyword id="KW-0067">ATP-binding</keyword>
<keyword id="KW-0963">Cytoplasm</keyword>
<keyword id="KW-0315">Glutamine amidotransferase</keyword>
<keyword id="KW-0436">Ligase</keyword>
<keyword id="KW-0460">Magnesium</keyword>
<keyword id="KW-0479">Metal-binding</keyword>
<keyword id="KW-0547">Nucleotide-binding</keyword>
<keyword id="KW-0658">Purine biosynthesis</keyword>
<name>PUR4_SODGM</name>
<organism>
    <name type="scientific">Sodalis glossinidius (strain morsitans)</name>
    <dbReference type="NCBI Taxonomy" id="343509"/>
    <lineage>
        <taxon>Bacteria</taxon>
        <taxon>Pseudomonadati</taxon>
        <taxon>Pseudomonadota</taxon>
        <taxon>Gammaproteobacteria</taxon>
        <taxon>Enterobacterales</taxon>
        <taxon>Bruguierivoracaceae</taxon>
        <taxon>Sodalis</taxon>
    </lineage>
</organism>
<reference key="1">
    <citation type="journal article" date="2006" name="Genome Res.">
        <title>Massive genome erosion and functional adaptations provide insights into the symbiotic lifestyle of Sodalis glossinidius in the tsetse host.</title>
        <authorList>
            <person name="Toh H."/>
            <person name="Weiss B.L."/>
            <person name="Perkin S.A.H."/>
            <person name="Yamashita A."/>
            <person name="Oshima K."/>
            <person name="Hattori M."/>
            <person name="Aksoy S."/>
        </authorList>
    </citation>
    <scope>NUCLEOTIDE SEQUENCE [LARGE SCALE GENOMIC DNA]</scope>
    <source>
        <strain>morsitans</strain>
    </source>
</reference>
<evidence type="ECO:0000255" key="1">
    <source>
        <dbReference type="HAMAP-Rule" id="MF_00419"/>
    </source>
</evidence>
<evidence type="ECO:0000256" key="2">
    <source>
        <dbReference type="SAM" id="MobiDB-lite"/>
    </source>
</evidence>
<proteinExistence type="inferred from homology"/>
<gene>
    <name evidence="1" type="primary">purL</name>
    <name type="ordered locus">SG1778</name>
</gene>
<accession>Q2NS22</accession>
<comment type="function">
    <text evidence="1">Phosphoribosylformylglycinamidine synthase involved in the purines biosynthetic pathway. Catalyzes the ATP-dependent conversion of formylglycinamide ribonucleotide (FGAR) and glutamine to yield formylglycinamidine ribonucleotide (FGAM) and glutamate.</text>
</comment>
<comment type="catalytic activity">
    <reaction evidence="1">
        <text>N(2)-formyl-N(1)-(5-phospho-beta-D-ribosyl)glycinamide + L-glutamine + ATP + H2O = 2-formamido-N(1)-(5-O-phospho-beta-D-ribosyl)acetamidine + L-glutamate + ADP + phosphate + H(+)</text>
        <dbReference type="Rhea" id="RHEA:17129"/>
        <dbReference type="ChEBI" id="CHEBI:15377"/>
        <dbReference type="ChEBI" id="CHEBI:15378"/>
        <dbReference type="ChEBI" id="CHEBI:29985"/>
        <dbReference type="ChEBI" id="CHEBI:30616"/>
        <dbReference type="ChEBI" id="CHEBI:43474"/>
        <dbReference type="ChEBI" id="CHEBI:58359"/>
        <dbReference type="ChEBI" id="CHEBI:147286"/>
        <dbReference type="ChEBI" id="CHEBI:147287"/>
        <dbReference type="ChEBI" id="CHEBI:456216"/>
        <dbReference type="EC" id="6.3.5.3"/>
    </reaction>
</comment>
<comment type="pathway">
    <text evidence="1">Purine metabolism; IMP biosynthesis via de novo pathway; 5-amino-1-(5-phospho-D-ribosyl)imidazole from N(2)-formyl-N(1)-(5-phospho-D-ribosyl)glycinamide: step 1/2.</text>
</comment>
<comment type="subunit">
    <text evidence="1">Monomer.</text>
</comment>
<comment type="subcellular location">
    <subcellularLocation>
        <location evidence="1">Cytoplasm</location>
    </subcellularLocation>
</comment>
<comment type="similarity">
    <text evidence="1">In the N-terminal section; belongs to the FGAMS family.</text>
</comment>